<dbReference type="EMBL" id="CP000576">
    <property type="protein sequence ID" value="ABO18365.1"/>
    <property type="molecule type" value="Genomic_DNA"/>
</dbReference>
<dbReference type="RefSeq" id="WP_011863655.1">
    <property type="nucleotide sequence ID" value="NC_009091.1"/>
</dbReference>
<dbReference type="SMR" id="A3PF40"/>
<dbReference type="STRING" id="167546.P9301_17421"/>
<dbReference type="KEGG" id="pmg:P9301_17421"/>
<dbReference type="eggNOG" id="COG0197">
    <property type="taxonomic scope" value="Bacteria"/>
</dbReference>
<dbReference type="HOGENOM" id="CLU_078858_2_1_3"/>
<dbReference type="OrthoDB" id="9802589at2"/>
<dbReference type="Proteomes" id="UP000001430">
    <property type="component" value="Chromosome"/>
</dbReference>
<dbReference type="GO" id="GO:1990904">
    <property type="term" value="C:ribonucleoprotein complex"/>
    <property type="evidence" value="ECO:0007669"/>
    <property type="project" value="UniProtKB-KW"/>
</dbReference>
<dbReference type="GO" id="GO:0005840">
    <property type="term" value="C:ribosome"/>
    <property type="evidence" value="ECO:0007669"/>
    <property type="project" value="UniProtKB-KW"/>
</dbReference>
<dbReference type="GO" id="GO:0019843">
    <property type="term" value="F:rRNA binding"/>
    <property type="evidence" value="ECO:0007669"/>
    <property type="project" value="UniProtKB-UniRule"/>
</dbReference>
<dbReference type="GO" id="GO:0003735">
    <property type="term" value="F:structural constituent of ribosome"/>
    <property type="evidence" value="ECO:0007669"/>
    <property type="project" value="InterPro"/>
</dbReference>
<dbReference type="GO" id="GO:0000049">
    <property type="term" value="F:tRNA binding"/>
    <property type="evidence" value="ECO:0007669"/>
    <property type="project" value="UniProtKB-KW"/>
</dbReference>
<dbReference type="GO" id="GO:0006412">
    <property type="term" value="P:translation"/>
    <property type="evidence" value="ECO:0007669"/>
    <property type="project" value="UniProtKB-UniRule"/>
</dbReference>
<dbReference type="CDD" id="cd01433">
    <property type="entry name" value="Ribosomal_L16_L10e"/>
    <property type="match status" value="1"/>
</dbReference>
<dbReference type="FunFam" id="3.90.1170.10:FF:000001">
    <property type="entry name" value="50S ribosomal protein L16"/>
    <property type="match status" value="1"/>
</dbReference>
<dbReference type="Gene3D" id="3.90.1170.10">
    <property type="entry name" value="Ribosomal protein L10e/L16"/>
    <property type="match status" value="1"/>
</dbReference>
<dbReference type="HAMAP" id="MF_01342">
    <property type="entry name" value="Ribosomal_uL16"/>
    <property type="match status" value="1"/>
</dbReference>
<dbReference type="InterPro" id="IPR047873">
    <property type="entry name" value="Ribosomal_uL16"/>
</dbReference>
<dbReference type="InterPro" id="IPR000114">
    <property type="entry name" value="Ribosomal_uL16_bact-type"/>
</dbReference>
<dbReference type="InterPro" id="IPR020798">
    <property type="entry name" value="Ribosomal_uL16_CS"/>
</dbReference>
<dbReference type="InterPro" id="IPR016180">
    <property type="entry name" value="Ribosomal_uL16_dom"/>
</dbReference>
<dbReference type="InterPro" id="IPR036920">
    <property type="entry name" value="Ribosomal_uL16_sf"/>
</dbReference>
<dbReference type="NCBIfam" id="TIGR01164">
    <property type="entry name" value="rplP_bact"/>
    <property type="match status" value="1"/>
</dbReference>
<dbReference type="PANTHER" id="PTHR12220">
    <property type="entry name" value="50S/60S RIBOSOMAL PROTEIN L16"/>
    <property type="match status" value="1"/>
</dbReference>
<dbReference type="PANTHER" id="PTHR12220:SF13">
    <property type="entry name" value="LARGE RIBOSOMAL SUBUNIT PROTEIN UL16M"/>
    <property type="match status" value="1"/>
</dbReference>
<dbReference type="Pfam" id="PF00252">
    <property type="entry name" value="Ribosomal_L16"/>
    <property type="match status" value="1"/>
</dbReference>
<dbReference type="PRINTS" id="PR00060">
    <property type="entry name" value="RIBOSOMALL16"/>
</dbReference>
<dbReference type="SUPFAM" id="SSF54686">
    <property type="entry name" value="Ribosomal protein L16p/L10e"/>
    <property type="match status" value="1"/>
</dbReference>
<dbReference type="PROSITE" id="PS00586">
    <property type="entry name" value="RIBOSOMAL_L16_1"/>
    <property type="match status" value="1"/>
</dbReference>
<dbReference type="PROSITE" id="PS00701">
    <property type="entry name" value="RIBOSOMAL_L16_2"/>
    <property type="match status" value="1"/>
</dbReference>
<keyword id="KW-1185">Reference proteome</keyword>
<keyword id="KW-0687">Ribonucleoprotein</keyword>
<keyword id="KW-0689">Ribosomal protein</keyword>
<keyword id="KW-0694">RNA-binding</keyword>
<keyword id="KW-0699">rRNA-binding</keyword>
<keyword id="KW-0820">tRNA-binding</keyword>
<gene>
    <name evidence="1" type="primary">rplP</name>
    <name evidence="1" type="synonym">rpl16</name>
    <name type="ordered locus">P9301_17421</name>
</gene>
<proteinExistence type="inferred from homology"/>
<sequence length="160" mass="18247">MLSPKRTKFRKQHRGRMRGVASKGNTIAFGQFALQAQDCGWVTARQIEASRRAMTRYIKRGGQIWIRIFPDKPVTMRPAETRMGSGKGNPEFWVAVVKPGRILFEMGGEDITEETAKEAMRLAQYKLPVKTKFISIDKNLEVSSQENTKNSKKSQEEVKQ</sequence>
<organism>
    <name type="scientific">Prochlorococcus marinus (strain MIT 9301)</name>
    <dbReference type="NCBI Taxonomy" id="167546"/>
    <lineage>
        <taxon>Bacteria</taxon>
        <taxon>Bacillati</taxon>
        <taxon>Cyanobacteriota</taxon>
        <taxon>Cyanophyceae</taxon>
        <taxon>Synechococcales</taxon>
        <taxon>Prochlorococcaceae</taxon>
        <taxon>Prochlorococcus</taxon>
    </lineage>
</organism>
<name>RL16_PROM0</name>
<reference key="1">
    <citation type="journal article" date="2007" name="PLoS Genet.">
        <title>Patterns and implications of gene gain and loss in the evolution of Prochlorococcus.</title>
        <authorList>
            <person name="Kettler G.C."/>
            <person name="Martiny A.C."/>
            <person name="Huang K."/>
            <person name="Zucker J."/>
            <person name="Coleman M.L."/>
            <person name="Rodrigue S."/>
            <person name="Chen F."/>
            <person name="Lapidus A."/>
            <person name="Ferriera S."/>
            <person name="Johnson J."/>
            <person name="Steglich C."/>
            <person name="Church G.M."/>
            <person name="Richardson P."/>
            <person name="Chisholm S.W."/>
        </authorList>
    </citation>
    <scope>NUCLEOTIDE SEQUENCE [LARGE SCALE GENOMIC DNA]</scope>
    <source>
        <strain>MIT 9301</strain>
    </source>
</reference>
<comment type="function">
    <text evidence="1">Binds 23S rRNA and is also seen to make contacts with the A and possibly P site tRNAs.</text>
</comment>
<comment type="subunit">
    <text evidence="1">Part of the 50S ribosomal subunit.</text>
</comment>
<comment type="similarity">
    <text evidence="1">Belongs to the universal ribosomal protein uL16 family.</text>
</comment>
<evidence type="ECO:0000255" key="1">
    <source>
        <dbReference type="HAMAP-Rule" id="MF_01342"/>
    </source>
</evidence>
<evidence type="ECO:0000305" key="2"/>
<accession>A3PF40</accession>
<feature type="chain" id="PRO_1000054674" description="Large ribosomal subunit protein uL16">
    <location>
        <begin position="1"/>
        <end position="160"/>
    </location>
</feature>
<protein>
    <recommendedName>
        <fullName evidence="1">Large ribosomal subunit protein uL16</fullName>
    </recommendedName>
    <alternativeName>
        <fullName evidence="2">50S ribosomal protein L16</fullName>
    </alternativeName>
</protein>